<proteinExistence type="evidence at protein level"/>
<organism>
    <name type="scientific">Homo sapiens</name>
    <name type="common">Human</name>
    <dbReference type="NCBI Taxonomy" id="9606"/>
    <lineage>
        <taxon>Eukaryota</taxon>
        <taxon>Metazoa</taxon>
        <taxon>Chordata</taxon>
        <taxon>Craniata</taxon>
        <taxon>Vertebrata</taxon>
        <taxon>Euteleostomi</taxon>
        <taxon>Mammalia</taxon>
        <taxon>Eutheria</taxon>
        <taxon>Euarchontoglires</taxon>
        <taxon>Primates</taxon>
        <taxon>Haplorrhini</taxon>
        <taxon>Catarrhini</taxon>
        <taxon>Hominidae</taxon>
        <taxon>Homo</taxon>
    </lineage>
</organism>
<dbReference type="EMBL" id="AY358965">
    <property type="protein sequence ID" value="AAQ89324.1"/>
    <property type="molecule type" value="mRNA"/>
</dbReference>
<dbReference type="EMBL" id="AF258578">
    <property type="protein sequence ID" value="AAG23781.1"/>
    <property type="molecule type" value="mRNA"/>
</dbReference>
<dbReference type="EMBL" id="AL833382">
    <property type="protein sequence ID" value="CAI46138.1"/>
    <property type="molecule type" value="mRNA"/>
</dbReference>
<dbReference type="EMBL" id="AC011479">
    <property type="status" value="NOT_ANNOTATED_CDS"/>
    <property type="molecule type" value="Genomic_DNA"/>
</dbReference>
<dbReference type="EMBL" id="CH471126">
    <property type="protein sequence ID" value="EAW56772.1"/>
    <property type="molecule type" value="Genomic_DNA"/>
</dbReference>
<dbReference type="EMBL" id="BC007644">
    <property type="protein sequence ID" value="AAH07644.1"/>
    <property type="molecule type" value="mRNA"/>
</dbReference>
<dbReference type="EMBL" id="BC014974">
    <property type="protein sequence ID" value="AAH14974.1"/>
    <property type="molecule type" value="mRNA"/>
</dbReference>
<dbReference type="EMBL" id="BC091477">
    <property type="protein sequence ID" value="AAH91477.2"/>
    <property type="molecule type" value="mRNA"/>
</dbReference>
<dbReference type="CCDS" id="CCDS12512.1">
    <molecule id="Q5BJH7-2"/>
</dbReference>
<dbReference type="CCDS" id="CCDS33010.1">
    <molecule id="Q5BJH7-1"/>
</dbReference>
<dbReference type="CCDS" id="CCDS46066.1">
    <molecule id="Q5BJH7-6"/>
</dbReference>
<dbReference type="CCDS" id="CCDS46067.1">
    <molecule id="Q5BJH7-4"/>
</dbReference>
<dbReference type="RefSeq" id="NP_001034760.1">
    <molecule id="Q5BJH7-6"/>
    <property type="nucleotide sequence ID" value="NM_001039671.3"/>
</dbReference>
<dbReference type="RefSeq" id="NP_001034761.1">
    <molecule id="Q5BJH7-1"/>
    <property type="nucleotide sequence ID" value="NM_001039672.3"/>
</dbReference>
<dbReference type="RefSeq" id="NP_001034762.1">
    <molecule id="Q5BJH7-3"/>
    <property type="nucleotide sequence ID" value="NM_001039673.3"/>
</dbReference>
<dbReference type="RefSeq" id="NP_001138934.1">
    <molecule id="Q5BJH7-2"/>
    <property type="nucleotide sequence ID" value="NM_001145462.2"/>
</dbReference>
<dbReference type="RefSeq" id="NP_001138935.1">
    <molecule id="Q5BJH7-4"/>
    <property type="nucleotide sequence ID" value="NM_001145463.2"/>
</dbReference>
<dbReference type="RefSeq" id="XP_005259442.1">
    <property type="nucleotide sequence ID" value="XM_005259385.3"/>
</dbReference>
<dbReference type="RefSeq" id="XP_016882938.1">
    <property type="nucleotide sequence ID" value="XM_017027449.1"/>
</dbReference>
<dbReference type="RefSeq" id="XP_047295603.1">
    <molecule id="Q5BJH7-2"/>
    <property type="nucleotide sequence ID" value="XM_047439647.1"/>
</dbReference>
<dbReference type="RefSeq" id="XP_047295604.1">
    <molecule id="Q5BJH7-2"/>
    <property type="nucleotide sequence ID" value="XM_047439648.1"/>
</dbReference>
<dbReference type="RefSeq" id="XP_054178529.1">
    <molecule id="Q5BJH7-2"/>
    <property type="nucleotide sequence ID" value="XM_054322554.1"/>
</dbReference>
<dbReference type="BioGRID" id="124728">
    <property type="interactions" value="103"/>
</dbReference>
<dbReference type="FunCoup" id="Q5BJH7">
    <property type="interactions" value="2137"/>
</dbReference>
<dbReference type="IntAct" id="Q5BJH7">
    <property type="interactions" value="62"/>
</dbReference>
<dbReference type="MINT" id="Q5BJH7"/>
<dbReference type="STRING" id="9606.ENSP00000343435"/>
<dbReference type="ChEMBL" id="CHEMBL5465315"/>
<dbReference type="GlyCosmos" id="Q5BJH7">
    <property type="glycosylation" value="1 site, 1 glycan"/>
</dbReference>
<dbReference type="GlyGen" id="Q5BJH7">
    <property type="glycosylation" value="5 sites, 1 O-linked glycan (5 sites)"/>
</dbReference>
<dbReference type="iPTMnet" id="Q5BJH7"/>
<dbReference type="PhosphoSitePlus" id="Q5BJH7"/>
<dbReference type="SwissPalm" id="Q5BJH7"/>
<dbReference type="BioMuta" id="YIF1B"/>
<dbReference type="DMDM" id="121944384"/>
<dbReference type="jPOST" id="Q5BJH7"/>
<dbReference type="MassIVE" id="Q5BJH7"/>
<dbReference type="PaxDb" id="9606-ENSP00000343435"/>
<dbReference type="PeptideAtlas" id="Q5BJH7"/>
<dbReference type="ProteomicsDB" id="43383"/>
<dbReference type="ProteomicsDB" id="62693">
    <molecule id="Q5BJH7-1"/>
</dbReference>
<dbReference type="ProteomicsDB" id="62694">
    <molecule id="Q5BJH7-2"/>
</dbReference>
<dbReference type="ProteomicsDB" id="62695">
    <molecule id="Q5BJH7-3"/>
</dbReference>
<dbReference type="ProteomicsDB" id="62696">
    <molecule id="Q5BJH7-4"/>
</dbReference>
<dbReference type="ProteomicsDB" id="62697">
    <molecule id="Q5BJH7-5"/>
</dbReference>
<dbReference type="Pumba" id="Q5BJH7"/>
<dbReference type="Antibodypedia" id="30011">
    <property type="antibodies" value="123 antibodies from 18 providers"/>
</dbReference>
<dbReference type="DNASU" id="90522"/>
<dbReference type="Ensembl" id="ENST00000329420.12">
    <molecule id="Q5BJH7-6"/>
    <property type="protein sequence ID" value="ENSP00000329559.7"/>
    <property type="gene ID" value="ENSG00000167645.17"/>
</dbReference>
<dbReference type="Ensembl" id="ENST00000337679.12">
    <molecule id="Q5BJH7-4"/>
    <property type="protein sequence ID" value="ENSP00000337411.7"/>
    <property type="gene ID" value="ENSG00000167645.17"/>
</dbReference>
<dbReference type="Ensembl" id="ENST00000339413.11">
    <molecule id="Q5BJH7-1"/>
    <property type="protein sequence ID" value="ENSP00000343435.5"/>
    <property type="gene ID" value="ENSG00000167645.17"/>
</dbReference>
<dbReference type="Ensembl" id="ENST00000392124.7">
    <molecule id="Q5BJH7-2"/>
    <property type="protein sequence ID" value="ENSP00000375971.2"/>
    <property type="gene ID" value="ENSG00000167645.17"/>
</dbReference>
<dbReference type="Ensembl" id="ENST00000591755.5">
    <molecule id="Q5BJH7-5"/>
    <property type="protein sequence ID" value="ENSP00000465446.1"/>
    <property type="gene ID" value="ENSG00000167645.17"/>
</dbReference>
<dbReference type="Ensembl" id="ENST00000591784.5">
    <molecule id="Q5BJH7-2"/>
    <property type="protein sequence ID" value="ENSP00000465230.1"/>
    <property type="gene ID" value="ENSG00000167645.17"/>
</dbReference>
<dbReference type="Ensembl" id="ENST00000592694.5">
    <molecule id="Q5BJH7-2"/>
    <property type="protein sequence ID" value="ENSP00000466428.1"/>
    <property type="gene ID" value="ENSG00000167645.17"/>
</dbReference>
<dbReference type="GeneID" id="90522"/>
<dbReference type="KEGG" id="hsa:90522"/>
<dbReference type="MANE-Select" id="ENST00000339413.11">
    <property type="protein sequence ID" value="ENSP00000343435.5"/>
    <property type="RefSeq nucleotide sequence ID" value="NM_001039672.3"/>
    <property type="RefSeq protein sequence ID" value="NP_001034761.1"/>
</dbReference>
<dbReference type="UCSC" id="uc002ohw.3">
    <molecule id="Q5BJH7-1"/>
    <property type="organism name" value="human"/>
</dbReference>
<dbReference type="AGR" id="HGNC:30511"/>
<dbReference type="CTD" id="90522"/>
<dbReference type="DisGeNET" id="90522"/>
<dbReference type="GeneCards" id="YIF1B"/>
<dbReference type="GeneReviews" id="YIF1B"/>
<dbReference type="HGNC" id="HGNC:30511">
    <property type="gene designation" value="YIF1B"/>
</dbReference>
<dbReference type="HPA" id="ENSG00000167645">
    <property type="expression patterns" value="Low tissue specificity"/>
</dbReference>
<dbReference type="MalaCards" id="YIF1B"/>
<dbReference type="MIM" id="619109">
    <property type="type" value="gene"/>
</dbReference>
<dbReference type="MIM" id="619125">
    <property type="type" value="phenotype"/>
</dbReference>
<dbReference type="neXtProt" id="NX_Q5BJH7"/>
<dbReference type="OpenTargets" id="ENSG00000167645"/>
<dbReference type="Orphanet" id="684240">
    <property type="disease" value="Neurodevelopmental disorder-spasticity-movement disorder-epileptic syndrome"/>
</dbReference>
<dbReference type="PharmGKB" id="PA142670561"/>
<dbReference type="VEuPathDB" id="HostDB:ENSG00000167645"/>
<dbReference type="eggNOG" id="KOG3094">
    <property type="taxonomic scope" value="Eukaryota"/>
</dbReference>
<dbReference type="GeneTree" id="ENSGT00390000009423"/>
<dbReference type="InParanoid" id="Q5BJH7"/>
<dbReference type="OMA" id="SGYKFVH"/>
<dbReference type="OrthoDB" id="337750at2759"/>
<dbReference type="PAN-GO" id="Q5BJH7">
    <property type="GO annotations" value="5 GO annotations based on evolutionary models"/>
</dbReference>
<dbReference type="PhylomeDB" id="Q5BJH7"/>
<dbReference type="TreeFam" id="TF314528"/>
<dbReference type="PathwayCommons" id="Q5BJH7"/>
<dbReference type="SignaLink" id="Q5BJH7"/>
<dbReference type="SIGNOR" id="Q5BJH7"/>
<dbReference type="BioGRID-ORCS" id="90522">
    <property type="hits" value="10 hits in 1157 CRISPR screens"/>
</dbReference>
<dbReference type="ChiTaRS" id="YIF1B">
    <property type="organism name" value="human"/>
</dbReference>
<dbReference type="GenomeRNAi" id="90522"/>
<dbReference type="Pharos" id="Q5BJH7">
    <property type="development level" value="Tbio"/>
</dbReference>
<dbReference type="PRO" id="PR:Q5BJH7"/>
<dbReference type="Proteomes" id="UP000005640">
    <property type="component" value="Chromosome 19"/>
</dbReference>
<dbReference type="RNAct" id="Q5BJH7">
    <property type="molecule type" value="protein"/>
</dbReference>
<dbReference type="Bgee" id="ENSG00000167645">
    <property type="expression patterns" value="Expressed in monocyte and 169 other cell types or tissues"/>
</dbReference>
<dbReference type="ExpressionAtlas" id="Q5BJH7">
    <property type="expression patterns" value="baseline and differential"/>
</dbReference>
<dbReference type="GO" id="GO:0030134">
    <property type="term" value="C:COPII-coated ER to Golgi transport vesicle"/>
    <property type="evidence" value="ECO:0000318"/>
    <property type="project" value="GO_Central"/>
</dbReference>
<dbReference type="GO" id="GO:0005783">
    <property type="term" value="C:endoplasmic reticulum"/>
    <property type="evidence" value="ECO:0000314"/>
    <property type="project" value="UniProtKB"/>
</dbReference>
<dbReference type="GO" id="GO:0005789">
    <property type="term" value="C:endoplasmic reticulum membrane"/>
    <property type="evidence" value="ECO:0000318"/>
    <property type="project" value="GO_Central"/>
</dbReference>
<dbReference type="GO" id="GO:0005793">
    <property type="term" value="C:endoplasmic reticulum-Golgi intermediate compartment"/>
    <property type="evidence" value="ECO:0000314"/>
    <property type="project" value="UniProtKB"/>
</dbReference>
<dbReference type="GO" id="GO:0033116">
    <property type="term" value="C:endoplasmic reticulum-Golgi intermediate compartment membrane"/>
    <property type="evidence" value="ECO:0007669"/>
    <property type="project" value="UniProtKB-SubCell"/>
</dbReference>
<dbReference type="GO" id="GO:0005794">
    <property type="term" value="C:Golgi apparatus"/>
    <property type="evidence" value="ECO:0000314"/>
    <property type="project" value="HPA"/>
</dbReference>
<dbReference type="GO" id="GO:0000139">
    <property type="term" value="C:Golgi membrane"/>
    <property type="evidence" value="ECO:0000318"/>
    <property type="project" value="GO_Central"/>
</dbReference>
<dbReference type="GO" id="GO:0043231">
    <property type="term" value="C:intracellular membrane-bounded organelle"/>
    <property type="evidence" value="ECO:0000314"/>
    <property type="project" value="HPA"/>
</dbReference>
<dbReference type="GO" id="GO:0006888">
    <property type="term" value="P:endoplasmic reticulum to Golgi vesicle-mediated transport"/>
    <property type="evidence" value="ECO:0000315"/>
    <property type="project" value="UniProtKB"/>
</dbReference>
<dbReference type="GO" id="GO:0006612">
    <property type="term" value="P:protein targeting to membrane"/>
    <property type="evidence" value="ECO:0000250"/>
    <property type="project" value="UniProtKB"/>
</dbReference>
<dbReference type="GO" id="GO:0015031">
    <property type="term" value="P:protein transport"/>
    <property type="evidence" value="ECO:0007669"/>
    <property type="project" value="UniProtKB-KW"/>
</dbReference>
<dbReference type="GO" id="GO:0120316">
    <property type="term" value="P:sperm flagellum assembly"/>
    <property type="evidence" value="ECO:0007669"/>
    <property type="project" value="Ensembl"/>
</dbReference>
<dbReference type="InterPro" id="IPR005578">
    <property type="entry name" value="Yif1_fam"/>
</dbReference>
<dbReference type="PANTHER" id="PTHR14083:SF1">
    <property type="entry name" value="PROTEIN YIF1B"/>
    <property type="match status" value="1"/>
</dbReference>
<dbReference type="PANTHER" id="PTHR14083">
    <property type="entry name" value="YIP1 INTERACTING FACTOR HOMOLOG YIF1 PROTEIN"/>
    <property type="match status" value="1"/>
</dbReference>
<dbReference type="Pfam" id="PF03878">
    <property type="entry name" value="YIF1"/>
    <property type="match status" value="1"/>
</dbReference>
<name>YIF1B_HUMAN</name>
<feature type="chain" id="PRO_0000307258" description="Protein YIF1B">
    <location>
        <begin position="1"/>
        <end position="314"/>
    </location>
</feature>
<feature type="topological domain" description="Cytoplasmic" evidence="3">
    <location>
        <begin position="1"/>
        <end position="156"/>
    </location>
</feature>
<feature type="transmembrane region" description="Helical" evidence="3">
    <location>
        <begin position="157"/>
        <end position="177"/>
    </location>
</feature>
<feature type="topological domain" description="Extracellular" evidence="3">
    <location>
        <begin position="178"/>
        <end position="192"/>
    </location>
</feature>
<feature type="transmembrane region" description="Helical" evidence="3">
    <location>
        <begin position="193"/>
        <end position="213"/>
    </location>
</feature>
<feature type="topological domain" description="Cytoplasmic" evidence="3">
    <location>
        <begin position="214"/>
        <end position="219"/>
    </location>
</feature>
<feature type="transmembrane region" description="Helical" evidence="3">
    <location>
        <begin position="220"/>
        <end position="240"/>
    </location>
</feature>
<feature type="topological domain" description="Extracellular" evidence="3">
    <location>
        <position position="241"/>
    </location>
</feature>
<feature type="transmembrane region" description="Helical" evidence="3">
    <location>
        <begin position="242"/>
        <end position="262"/>
    </location>
</feature>
<feature type="topological domain" description="Cytoplasmic" evidence="3">
    <location>
        <begin position="263"/>
        <end position="292"/>
    </location>
</feature>
<feature type="transmembrane region" description="Helical" evidence="3">
    <location>
        <begin position="293"/>
        <end position="313"/>
    </location>
</feature>
<feature type="topological domain" description="Extracellular" evidence="3">
    <location>
        <position position="314"/>
    </location>
</feature>
<feature type="region of interest" description="Disordered" evidence="4">
    <location>
        <begin position="1"/>
        <end position="55"/>
    </location>
</feature>
<feature type="compositionally biased region" description="Low complexity" evidence="4">
    <location>
        <begin position="1"/>
        <end position="12"/>
    </location>
</feature>
<feature type="compositionally biased region" description="Basic residues" evidence="4">
    <location>
        <begin position="15"/>
        <end position="25"/>
    </location>
</feature>
<feature type="modified residue" description="N-acetylmethionine" evidence="2">
    <location>
        <position position="1"/>
    </location>
</feature>
<feature type="modified residue" description="Phosphothreonine" evidence="2">
    <location>
        <position position="13"/>
    </location>
</feature>
<feature type="modified residue" description="Phosphoserine" evidence="15 16">
    <location>
        <position position="65"/>
    </location>
</feature>
<feature type="splice variant" id="VSP_028650" description="In isoform 2." evidence="9 11">
    <location>
        <begin position="1"/>
        <end position="31"/>
    </location>
</feature>
<feature type="splice variant" id="VSP_046823" description="In isoform 6." evidence="13">
    <original>MHPAGLAAAAAGTPRLRKWP</original>
    <variation>MPGSA</variation>
    <location>
        <begin position="1"/>
        <end position="20"/>
    </location>
</feature>
<feature type="splice variant" id="VSP_028651" description="In isoform 3, isoform 4 and isoform 5." evidence="10 12">
    <location>
        <begin position="17"/>
        <end position="19"/>
    </location>
</feature>
<feature type="splice variant" id="VSP_028652" description="In isoform 5." evidence="10">
    <original>IRTLRLKILADAAAEGVPVRGARNQLRMYLTMAV</original>
    <variation>FPLLPGAVAHACNPSTLGGRGGRITRSGDQDHPG</variation>
    <location>
        <begin position="264"/>
        <end position="297"/>
    </location>
</feature>
<feature type="splice variant" id="VSP_028653" description="In isoform 4." evidence="12">
    <original>IRTLRLKILADAAAEGVPVRGARNQLRMYLT</original>
    <variation>FPLLPGAVAHACNPSTLGGRGGRITRSGRCG</variation>
    <location>
        <begin position="264"/>
        <end position="294"/>
    </location>
</feature>
<feature type="splice variant" id="VSP_028654" description="In isoform 4." evidence="12">
    <location>
        <begin position="295"/>
        <end position="314"/>
    </location>
</feature>
<feature type="splice variant" id="VSP_028655" description="In isoform 5." evidence="10">
    <location>
        <begin position="298"/>
        <end position="314"/>
    </location>
</feature>
<feature type="sequence variant" id="VAR_035385" description="In dbSNP:rs11556992.">
    <original>P</original>
    <variation>S</variation>
    <location>
        <position position="56"/>
    </location>
</feature>
<feature type="sequence variant" id="VAR_085531" description="In KABAMAS; decreased protein abundance; dbSNP:rs1969205627." evidence="8">
    <original>K</original>
    <variation>Q</variation>
    <location>
        <position position="123"/>
    </location>
</feature>
<feature type="sequence variant" id="VAR_085532" description="In KABAMAS; loss of expression." evidence="7 8">
    <location>
        <begin position="200"/>
        <end position="314"/>
    </location>
</feature>
<protein>
    <recommendedName>
        <fullName evidence="13">Protein YIF1B</fullName>
    </recommendedName>
    <alternativeName>
        <fullName>YIP1-interacting factor homolog B</fullName>
    </alternativeName>
</protein>
<reference key="1">
    <citation type="journal article" date="2003" name="Genome Res.">
        <title>The secreted protein discovery initiative (SPDI), a large-scale effort to identify novel human secreted and transmembrane proteins: a bioinformatics assessment.</title>
        <authorList>
            <person name="Clark H.F."/>
            <person name="Gurney A.L."/>
            <person name="Abaya E."/>
            <person name="Baker K."/>
            <person name="Baldwin D.T."/>
            <person name="Brush J."/>
            <person name="Chen J."/>
            <person name="Chow B."/>
            <person name="Chui C."/>
            <person name="Crowley C."/>
            <person name="Currell B."/>
            <person name="Deuel B."/>
            <person name="Dowd P."/>
            <person name="Eaton D."/>
            <person name="Foster J.S."/>
            <person name="Grimaldi C."/>
            <person name="Gu Q."/>
            <person name="Hass P.E."/>
            <person name="Heldens S."/>
            <person name="Huang A."/>
            <person name="Kim H.S."/>
            <person name="Klimowski L."/>
            <person name="Jin Y."/>
            <person name="Johnson S."/>
            <person name="Lee J."/>
            <person name="Lewis L."/>
            <person name="Liao D."/>
            <person name="Mark M.R."/>
            <person name="Robbie E."/>
            <person name="Sanchez C."/>
            <person name="Schoenfeld J."/>
            <person name="Seshagiri S."/>
            <person name="Simmons L."/>
            <person name="Singh J."/>
            <person name="Smith V."/>
            <person name="Stinson J."/>
            <person name="Vagts A."/>
            <person name="Vandlen R.L."/>
            <person name="Watanabe C."/>
            <person name="Wieand D."/>
            <person name="Woods K."/>
            <person name="Xie M.-H."/>
            <person name="Yansura D.G."/>
            <person name="Yi S."/>
            <person name="Yu G."/>
            <person name="Yuan J."/>
            <person name="Zhang M."/>
            <person name="Zhang Z."/>
            <person name="Goddard A.D."/>
            <person name="Wood W.I."/>
            <person name="Godowski P.J."/>
            <person name="Gray A.M."/>
        </authorList>
    </citation>
    <scope>NUCLEOTIDE SEQUENCE [LARGE SCALE MRNA] (ISOFORM 2)</scope>
</reference>
<reference key="2">
    <citation type="journal article" date="2004" name="Proc. Natl. Acad. Sci. U.S.A.">
        <title>Large-scale cDNA transfection screening for genes related to cancer development and progression.</title>
        <authorList>
            <person name="Wan D."/>
            <person name="Gong Y."/>
            <person name="Qin W."/>
            <person name="Zhang P."/>
            <person name="Li J."/>
            <person name="Wei L."/>
            <person name="Zhou X."/>
            <person name="Li H."/>
            <person name="Qiu X."/>
            <person name="Zhong F."/>
            <person name="He L."/>
            <person name="Yu J."/>
            <person name="Yao G."/>
            <person name="Jiang H."/>
            <person name="Qian L."/>
            <person name="Yu Y."/>
            <person name="Shu H."/>
            <person name="Chen X."/>
            <person name="Xu H."/>
            <person name="Guo M."/>
            <person name="Pan Z."/>
            <person name="Chen Y."/>
            <person name="Ge C."/>
            <person name="Yang S."/>
            <person name="Gu J."/>
        </authorList>
    </citation>
    <scope>NUCLEOTIDE SEQUENCE [LARGE SCALE MRNA] (ISOFORM 2)</scope>
</reference>
<reference key="3">
    <citation type="journal article" date="2007" name="BMC Genomics">
        <title>The full-ORF clone resource of the German cDNA consortium.</title>
        <authorList>
            <person name="Bechtel S."/>
            <person name="Rosenfelder H."/>
            <person name="Duda A."/>
            <person name="Schmidt C.P."/>
            <person name="Ernst U."/>
            <person name="Wellenreuther R."/>
            <person name="Mehrle A."/>
            <person name="Schuster C."/>
            <person name="Bahr A."/>
            <person name="Bloecker H."/>
            <person name="Heubner D."/>
            <person name="Hoerlein A."/>
            <person name="Michel G."/>
            <person name="Wedler H."/>
            <person name="Koehrer K."/>
            <person name="Ottenwaelder B."/>
            <person name="Poustka A."/>
            <person name="Wiemann S."/>
            <person name="Schupp I."/>
        </authorList>
    </citation>
    <scope>NUCLEOTIDE SEQUENCE [LARGE SCALE MRNA] (ISOFORM 4)</scope>
    <source>
        <tissue>Lymph node</tissue>
    </source>
</reference>
<reference key="4">
    <citation type="submission" date="2005-07" db="EMBL/GenBank/DDBJ databases">
        <authorList>
            <person name="Mural R.J."/>
            <person name="Istrail S."/>
            <person name="Sutton G.G."/>
            <person name="Florea L."/>
            <person name="Halpern A.L."/>
            <person name="Mobarry C.M."/>
            <person name="Lippert R."/>
            <person name="Walenz B."/>
            <person name="Shatkay H."/>
            <person name="Dew I."/>
            <person name="Miller J.R."/>
            <person name="Flanigan M.J."/>
            <person name="Edwards N.J."/>
            <person name="Bolanos R."/>
            <person name="Fasulo D."/>
            <person name="Halldorsson B.V."/>
            <person name="Hannenhalli S."/>
            <person name="Turner R."/>
            <person name="Yooseph S."/>
            <person name="Lu F."/>
            <person name="Nusskern D.R."/>
            <person name="Shue B.C."/>
            <person name="Zheng X.H."/>
            <person name="Zhong F."/>
            <person name="Delcher A.L."/>
            <person name="Huson D.H."/>
            <person name="Kravitz S.A."/>
            <person name="Mouchard L."/>
            <person name="Reinert K."/>
            <person name="Remington K.A."/>
            <person name="Clark A.G."/>
            <person name="Waterman M.S."/>
            <person name="Eichler E.E."/>
            <person name="Adams M.D."/>
            <person name="Hunkapiller M.W."/>
            <person name="Myers E.W."/>
            <person name="Venter J.C."/>
        </authorList>
    </citation>
    <scope>NUCLEOTIDE SEQUENCE [LARGE SCALE GENOMIC DNA]</scope>
</reference>
<reference key="5">
    <citation type="journal article" date="2004" name="Nature">
        <title>The DNA sequence and biology of human chromosome 19.</title>
        <authorList>
            <person name="Grimwood J."/>
            <person name="Gordon L.A."/>
            <person name="Olsen A.S."/>
            <person name="Terry A."/>
            <person name="Schmutz J."/>
            <person name="Lamerdin J.E."/>
            <person name="Hellsten U."/>
            <person name="Goodstein D."/>
            <person name="Couronne O."/>
            <person name="Tran-Gyamfi M."/>
            <person name="Aerts A."/>
            <person name="Altherr M."/>
            <person name="Ashworth L."/>
            <person name="Bajorek E."/>
            <person name="Black S."/>
            <person name="Branscomb E."/>
            <person name="Caenepeel S."/>
            <person name="Carrano A.V."/>
            <person name="Caoile C."/>
            <person name="Chan Y.M."/>
            <person name="Christensen M."/>
            <person name="Cleland C.A."/>
            <person name="Copeland A."/>
            <person name="Dalin E."/>
            <person name="Dehal P."/>
            <person name="Denys M."/>
            <person name="Detter J.C."/>
            <person name="Escobar J."/>
            <person name="Flowers D."/>
            <person name="Fotopulos D."/>
            <person name="Garcia C."/>
            <person name="Georgescu A.M."/>
            <person name="Glavina T."/>
            <person name="Gomez M."/>
            <person name="Gonzales E."/>
            <person name="Groza M."/>
            <person name="Hammon N."/>
            <person name="Hawkins T."/>
            <person name="Haydu L."/>
            <person name="Ho I."/>
            <person name="Huang W."/>
            <person name="Israni S."/>
            <person name="Jett J."/>
            <person name="Kadner K."/>
            <person name="Kimball H."/>
            <person name="Kobayashi A."/>
            <person name="Larionov V."/>
            <person name="Leem S.-H."/>
            <person name="Lopez F."/>
            <person name="Lou Y."/>
            <person name="Lowry S."/>
            <person name="Malfatti S."/>
            <person name="Martinez D."/>
            <person name="McCready P.M."/>
            <person name="Medina C."/>
            <person name="Morgan J."/>
            <person name="Nelson K."/>
            <person name="Nolan M."/>
            <person name="Ovcharenko I."/>
            <person name="Pitluck S."/>
            <person name="Pollard M."/>
            <person name="Popkie A.P."/>
            <person name="Predki P."/>
            <person name="Quan G."/>
            <person name="Ramirez L."/>
            <person name="Rash S."/>
            <person name="Retterer J."/>
            <person name="Rodriguez A."/>
            <person name="Rogers S."/>
            <person name="Salamov A."/>
            <person name="Salazar A."/>
            <person name="She X."/>
            <person name="Smith D."/>
            <person name="Slezak T."/>
            <person name="Solovyev V."/>
            <person name="Thayer N."/>
            <person name="Tice H."/>
            <person name="Tsai M."/>
            <person name="Ustaszewska A."/>
            <person name="Vo N."/>
            <person name="Wagner M."/>
            <person name="Wheeler J."/>
            <person name="Wu K."/>
            <person name="Xie G."/>
            <person name="Yang J."/>
            <person name="Dubchak I."/>
            <person name="Furey T.S."/>
            <person name="DeJong P."/>
            <person name="Dickson M."/>
            <person name="Gordon D."/>
            <person name="Eichler E.E."/>
            <person name="Pennacchio L.A."/>
            <person name="Richardson P."/>
            <person name="Stubbs L."/>
            <person name="Rokhsar D.S."/>
            <person name="Myers R.M."/>
            <person name="Rubin E.M."/>
            <person name="Lucas S.M."/>
        </authorList>
    </citation>
    <scope>NUCLEOTIDE SEQUENCE [LARGE SCALE GENOMIC DNA]</scope>
</reference>
<reference key="6">
    <citation type="journal article" date="2004" name="Genome Res.">
        <title>The status, quality, and expansion of the NIH full-length cDNA project: the Mammalian Gene Collection (MGC).</title>
        <authorList>
            <consortium name="The MGC Project Team"/>
        </authorList>
    </citation>
    <scope>NUCLEOTIDE SEQUENCE [LARGE SCALE MRNA] (ISOFORMS 1 AND 5)</scope>
    <scope>NUCLEOTIDE SEQUENCE [LARGE SCALE MRNA] OF 2-314 (ISOFORM 3)</scope>
    <source>
        <tissue>Colon</tissue>
        <tissue>Lung</tissue>
        <tissue>Placenta</tissue>
    </source>
</reference>
<reference key="7">
    <citation type="journal article" date="2008" name="Proc. Natl. Acad. Sci. U.S.A.">
        <title>A quantitative atlas of mitotic phosphorylation.</title>
        <authorList>
            <person name="Dephoure N."/>
            <person name="Zhou C."/>
            <person name="Villen J."/>
            <person name="Beausoleil S.A."/>
            <person name="Bakalarski C.E."/>
            <person name="Elledge S.J."/>
            <person name="Gygi S.P."/>
        </authorList>
    </citation>
    <scope>PHOSPHORYLATION [LARGE SCALE ANALYSIS] AT SER-65</scope>
    <scope>IDENTIFICATION BY MASS SPECTROMETRY [LARGE SCALE ANALYSIS]</scope>
    <source>
        <tissue>Cervix carcinoma</tissue>
    </source>
</reference>
<reference key="8">
    <citation type="journal article" date="2009" name="Sci. Signal.">
        <title>Quantitative phosphoproteomic analysis of T cell receptor signaling reveals system-wide modulation of protein-protein interactions.</title>
        <authorList>
            <person name="Mayya V."/>
            <person name="Lundgren D.H."/>
            <person name="Hwang S.-I."/>
            <person name="Rezaul K."/>
            <person name="Wu L."/>
            <person name="Eng J.K."/>
            <person name="Rodionov V."/>
            <person name="Han D.K."/>
        </authorList>
    </citation>
    <scope>PHOSPHORYLATION [LARGE SCALE ANALYSIS] AT SER-65</scope>
    <scope>IDENTIFICATION BY MASS SPECTROMETRY [LARGE SCALE ANALYSIS]</scope>
    <source>
        <tissue>Leukemic T-cell</tissue>
    </source>
</reference>
<reference key="9">
    <citation type="journal article" date="2010" name="Sci. Signal.">
        <title>Quantitative phosphoproteomics reveals widespread full phosphorylation site occupancy during mitosis.</title>
        <authorList>
            <person name="Olsen J.V."/>
            <person name="Vermeulen M."/>
            <person name="Santamaria A."/>
            <person name="Kumar C."/>
            <person name="Miller M.L."/>
            <person name="Jensen L.J."/>
            <person name="Gnad F."/>
            <person name="Cox J."/>
            <person name="Jensen T.S."/>
            <person name="Nigg E.A."/>
            <person name="Brunak S."/>
            <person name="Mann M."/>
        </authorList>
    </citation>
    <scope>IDENTIFICATION BY MASS SPECTROMETRY [LARGE SCALE ANALYSIS]</scope>
    <source>
        <tissue>Cervix carcinoma</tissue>
    </source>
</reference>
<reference key="10">
    <citation type="journal article" date="2011" name="BMC Syst. Biol.">
        <title>Initial characterization of the human central proteome.</title>
        <authorList>
            <person name="Burkard T.R."/>
            <person name="Planyavsky M."/>
            <person name="Kaupe I."/>
            <person name="Breitwieser F.P."/>
            <person name="Buerckstuemmer T."/>
            <person name="Bennett K.L."/>
            <person name="Superti-Furga G."/>
            <person name="Colinge J."/>
        </authorList>
    </citation>
    <scope>IDENTIFICATION BY MASS SPECTROMETRY [LARGE SCALE ANALYSIS]</scope>
</reference>
<reference key="11">
    <citation type="journal article" date="2015" name="Traffic">
        <title>Yif1B Is Involved in the Anterograde Traffic Pathway and the Golgi Architecture.</title>
        <authorList>
            <person name="Alterio J."/>
            <person name="Masson J."/>
            <person name="Diaz J."/>
            <person name="Chachlaki K."/>
            <person name="Salman H."/>
            <person name="Areias J."/>
            <person name="Al Awabdh S."/>
            <person name="Emerit M.B."/>
            <person name="Darmon M."/>
        </authorList>
    </citation>
    <scope>SUBCELLULAR LOCATION</scope>
</reference>
<reference key="12">
    <citation type="journal article" date="2019" name="J. Biol. Chem.">
        <title>Lysosomal targeting of the ABC transporter TAPL is determined by membrane-localized charged residues.</title>
        <authorList>
            <person name="Graab P."/>
            <person name="Bock C."/>
            <person name="Weiss K."/>
            <person name="Hirth A."/>
            <person name="Koller N."/>
            <person name="Braner M."/>
            <person name="Jung J."/>
            <person name="Loehr F."/>
            <person name="Tampe R."/>
            <person name="Behrends C."/>
            <person name="Abele R."/>
        </authorList>
    </citation>
    <scope>INTERACTION WITH ABCB9</scope>
</reference>
<reference key="13">
    <citation type="journal article" date="2020" name="Acta Neuropathol.">
        <title>Truncating mutations in YIF1B cause a progressive encephalopathy with various degrees of mixed movement disorder, microcephaly, and epilepsy.</title>
        <authorList>
            <person name="AlMuhaizea M."/>
            <person name="AlMass R."/>
            <person name="AlHargan A."/>
            <person name="AlBader A."/>
            <person name="Medico Salsench E."/>
            <person name="Howaidi J."/>
            <person name="Ihinger J."/>
            <person name="Karachunski P."/>
            <person name="Begtrup A."/>
            <person name="Segura Castell M."/>
            <person name="Bauer P."/>
            <person name="Bertoli-Avella A."/>
            <person name="Kaya I.H."/>
            <person name="AlSufayan J."/>
            <person name="AlQuait L."/>
            <person name="Chedrawi A."/>
            <person name="Arold S.T."/>
            <person name="Colak D."/>
            <person name="Barakat T.S."/>
            <person name="Kaya N."/>
        </authorList>
    </citation>
    <scope>INVOLVEMENT IN KABAMAS</scope>
    <scope>VARIANT KABAMAS 200-GLU--ARG-314 DEL</scope>
</reference>
<reference key="14">
    <citation type="journal article" date="2020" name="Brain">
        <title>YIF1B mutations cause a post-natal neurodevelopmental syndrome associated with Golgi and primary cilium alterations.</title>
        <authorList>
            <person name="Diaz J."/>
            <person name="Gerard X."/>
            <person name="Emerit M.B."/>
            <person name="Areias J."/>
            <person name="Geny D."/>
            <person name="Degardin J."/>
            <person name="Simonutti M."/>
            <person name="Guerquin M.J."/>
            <person name="Collin T."/>
            <person name="Viollet C."/>
            <person name="Billard J.M."/>
            <person name="Metin C."/>
            <person name="Hubert L."/>
            <person name="Larti F."/>
            <person name="Kahrizi K."/>
            <person name="Jobling R."/>
            <person name="Agolini E."/>
            <person name="Shaheen R."/>
            <person name="Zigler A."/>
            <person name="Rouiller-Fabre V."/>
            <person name="Rozet J.M."/>
            <person name="Picaud S."/>
            <person name="Novelli A."/>
            <person name="Alameer S."/>
            <person name="Najmabadi H."/>
            <person name="Cohn R."/>
            <person name="Munnich A."/>
            <person name="Barth M."/>
            <person name="Lugli L."/>
            <person name="Alkuraya F.S."/>
            <person name="Blaser S."/>
            <person name="Gashlan M."/>
            <person name="Besmond C."/>
            <person name="Darmon M."/>
            <person name="Masson J."/>
        </authorList>
    </citation>
    <scope>VARIANTS KABAMAS GLN-123 AND 200-GLU--ARG-314 DEL</scope>
    <scope>CHARACTERIZATION OF VARIANTS KABAMAS GLN-123 AND 200-GLU--ARG-314 DEL</scope>
    <scope>FUNCTION</scope>
</reference>
<keyword id="KW-0007">Acetylation</keyword>
<keyword id="KW-0025">Alternative splicing</keyword>
<keyword id="KW-0225">Disease variant</keyword>
<keyword id="KW-0256">Endoplasmic reticulum</keyword>
<keyword id="KW-0333">Golgi apparatus</keyword>
<keyword id="KW-0991">Intellectual disability</keyword>
<keyword id="KW-0472">Membrane</keyword>
<keyword id="KW-0597">Phosphoprotein</keyword>
<keyword id="KW-0653">Protein transport</keyword>
<keyword id="KW-1267">Proteomics identification</keyword>
<keyword id="KW-1185">Reference proteome</keyword>
<keyword id="KW-0812">Transmembrane</keyword>
<keyword id="KW-1133">Transmembrane helix</keyword>
<keyword id="KW-0813">Transport</keyword>
<comment type="function">
    <text evidence="1 2 8">Functions in endoplasmic reticulum to Golgi vesicle-mediated transport and regulates the proper organization of the endoplasmic reticulum and the Golgi (By similarity). Plays a key role in targeting to neuronal dendrites receptors such as HTR1A (By similarity). Plays also a role in primary cilium and sperm flagellum assembly probably through protein transport to these compartments (PubMed:33103737).</text>
</comment>
<comment type="subunit">
    <text evidence="1 6">Interacts with HTR1A (via C-terminus). Interacts with ABCB9 (via TMD0); this interaction allows (but is not essential) the ER-to-Golgi trafficking and strongly depends on a salt bridge within TMD0 (PubMed:30877195).</text>
</comment>
<comment type="interaction">
    <interactant intactId="EBI-11288011">
        <id>Q5BJH7</id>
    </interactant>
    <interactant intactId="EBI-702400">
        <id>Q07065</id>
        <label>CKAP4</label>
    </interactant>
    <organismsDiffer>false</organismsDiffer>
    <experiments>2</experiments>
</comment>
<comment type="interaction">
    <interactant intactId="EBI-11288011">
        <id>Q5BJH7</id>
    </interactant>
    <interactant intactId="EBI-15639515">
        <id>O15354</id>
        <label>GPR37</label>
    </interactant>
    <organismsDiffer>false</organismsDiffer>
    <experiments>2</experiments>
</comment>
<comment type="interaction">
    <interactant intactId="EBI-12158885">
        <id>Q5BJH7-5</id>
    </interactant>
    <interactant intactId="EBI-1044504">
        <id>Q9BS40</id>
        <label>LXN</label>
    </interactant>
    <organismsDiffer>false</organismsDiffer>
    <experiments>3</experiments>
</comment>
<comment type="subcellular location">
    <subcellularLocation>
        <location evidence="5">Endoplasmic reticulum membrane</location>
        <topology evidence="3">Multi-pass membrane protein</topology>
    </subcellularLocation>
    <subcellularLocation>
        <location evidence="5">Golgi apparatus membrane</location>
        <topology evidence="3">Multi-pass membrane protein</topology>
    </subcellularLocation>
    <subcellularLocation>
        <location evidence="5">Endoplasmic reticulum-Golgi intermediate compartment membrane</location>
        <topology evidence="3">Multi-pass membrane protein</topology>
    </subcellularLocation>
    <text evidence="5">Shuttles between the endoplasmic reticulum, the intermediate compartment and the Golgi apparatus.</text>
</comment>
<comment type="alternative products">
    <event type="alternative splicing"/>
    <isoform>
        <id>Q5BJH7-1</id>
        <name>1</name>
        <sequence type="displayed"/>
    </isoform>
    <isoform>
        <id>Q5BJH7-2</id>
        <name>2</name>
        <sequence type="described" ref="VSP_028650"/>
    </isoform>
    <isoform>
        <id>Q5BJH7-3</id>
        <name>3</name>
        <sequence type="described" ref="VSP_028651"/>
    </isoform>
    <isoform>
        <id>Q5BJH7-4</id>
        <name>4</name>
        <sequence type="described" ref="VSP_028651 VSP_028653 VSP_028654"/>
    </isoform>
    <isoform>
        <id>Q5BJH7-5</id>
        <name>5</name>
        <sequence type="described" ref="VSP_028651 VSP_028652 VSP_028655"/>
    </isoform>
    <isoform>
        <id>Q5BJH7-6</id>
        <name>6</name>
        <sequence type="described" ref="VSP_046823"/>
    </isoform>
</comment>
<comment type="disease" evidence="7 8">
    <disease id="DI-05991">
        <name>Kaya-Barakat-Masson syndrome</name>
        <acronym>KABAMAS</acronym>
        <description>An autosomal recessive neurodevelopmental disorder characterized by impaired intellectual development, absent speech, hypotonia, profound developmental and motor delay with dystonia, poor coordination and spasticity, and visual deficits with brain MRI evidence of ventricle enlargement, myelination alterations and cerebellar atrophy.</description>
        <dbReference type="MIM" id="619125"/>
    </disease>
    <text>The disease is caused by variants affecting the gene represented in this entry.</text>
</comment>
<comment type="similarity">
    <text evidence="13">Belongs to the YIF1 family.</text>
</comment>
<gene>
    <name evidence="14" type="primary">YIF1B</name>
    <name type="ORF">PP4519</name>
    <name type="ORF">UNQ3073/PRO9905</name>
</gene>
<evidence type="ECO:0000250" key="1">
    <source>
        <dbReference type="UniProtKB" id="Q6PEC3"/>
    </source>
</evidence>
<evidence type="ECO:0000250" key="2">
    <source>
        <dbReference type="UniProtKB" id="Q9CX30"/>
    </source>
</evidence>
<evidence type="ECO:0000255" key="3"/>
<evidence type="ECO:0000256" key="4">
    <source>
        <dbReference type="SAM" id="MobiDB-lite"/>
    </source>
</evidence>
<evidence type="ECO:0000269" key="5">
    <source>
    </source>
</evidence>
<evidence type="ECO:0000269" key="6">
    <source>
    </source>
</evidence>
<evidence type="ECO:0000269" key="7">
    <source>
    </source>
</evidence>
<evidence type="ECO:0000269" key="8">
    <source>
    </source>
</evidence>
<evidence type="ECO:0000303" key="9">
    <source>
    </source>
</evidence>
<evidence type="ECO:0000303" key="10">
    <source>
    </source>
</evidence>
<evidence type="ECO:0000303" key="11">
    <source>
    </source>
</evidence>
<evidence type="ECO:0000303" key="12">
    <source>
    </source>
</evidence>
<evidence type="ECO:0000305" key="13"/>
<evidence type="ECO:0000312" key="14">
    <source>
        <dbReference type="HGNC" id="HGNC:30511"/>
    </source>
</evidence>
<evidence type="ECO:0007744" key="15">
    <source>
    </source>
</evidence>
<evidence type="ECO:0007744" key="16">
    <source>
    </source>
</evidence>
<accession>Q5BJH7</accession>
<accession>H7BXS8</accession>
<accession>Q5JPC2</accession>
<accession>Q8WY70</accession>
<accession>Q96C02</accession>
<accession>Q96IC4</accession>
<sequence>MHPAGLAAAAAGTPRLRKWPSKRRIPVSQPGMADPHQLFDDTSSAQSRGYGAQRAPGGLSYPAASPTPHAAFLADPVSNMAMAYGSSLAAQGKELVDKNIDRFIPITKLKYYFAVDTMYVGRKLGLLFFPYLHQDWEVQYQQDTPVAPRFDVNAPDLYIPAMAFITYVLVAGLALGTQDRFSPDLLGLQASSALAWLTLEVLAILLSLYLVTVNTDLTTIDLVAFLGYKYVGMIGGVLMGLLFGKIGYYLVLGWCCVAIFVFMIRTLRLKILADAAAEGVPVRGARNQLRMYLTMAVAAAQPMLMYWLTFHLVR</sequence>